<reference key="1">
    <citation type="journal article" date="2003" name="Nature">
        <title>The genome of a motile marine Synechococcus.</title>
        <authorList>
            <person name="Palenik B."/>
            <person name="Brahamsha B."/>
            <person name="Larimer F.W."/>
            <person name="Land M.L."/>
            <person name="Hauser L."/>
            <person name="Chain P."/>
            <person name="Lamerdin J.E."/>
            <person name="Regala W."/>
            <person name="Allen E.E."/>
            <person name="McCarren J."/>
            <person name="Paulsen I.T."/>
            <person name="Dufresne A."/>
            <person name="Partensky F."/>
            <person name="Webb E.A."/>
            <person name="Waterbury J."/>
        </authorList>
    </citation>
    <scope>NUCLEOTIDE SEQUENCE [LARGE SCALE GENOMIC DNA]</scope>
    <source>
        <strain>WH8102</strain>
    </source>
</reference>
<organism>
    <name type="scientific">Parasynechococcus marenigrum (strain WH8102)</name>
    <dbReference type="NCBI Taxonomy" id="84588"/>
    <lineage>
        <taxon>Bacteria</taxon>
        <taxon>Bacillati</taxon>
        <taxon>Cyanobacteriota</taxon>
        <taxon>Cyanophyceae</taxon>
        <taxon>Synechococcales</taxon>
        <taxon>Prochlorococcaceae</taxon>
        <taxon>Parasynechococcus</taxon>
        <taxon>Parasynechococcus marenigrum</taxon>
    </lineage>
</organism>
<sequence>MFDPFLEELQTGIQARGGISVEVPAGLEHNQSQKGSSTIQSWLWQVPGFRRWRVTRLDAGDSLQVLNSVAYPDFDLDHPLMGVDLLWFGARQKLVAVLDFQPLVQDKDYLDRHFDGLKDLNARFPDLNGEETMRSFDPNQYFSSWLLFCRGGSEEADRSLPKAFSAFLKAYWGLHDEASKEPSSISPGDVERLQNAYDVYSAERDPAHGLFTSHFGKEWSDRFLHEFLFPASQPA</sequence>
<dbReference type="EC" id="1.3.7.2"/>
<dbReference type="EMBL" id="BX569694">
    <property type="protein sequence ID" value="CAE08535.1"/>
    <property type="molecule type" value="Genomic_DNA"/>
</dbReference>
<dbReference type="RefSeq" id="WP_011128878.1">
    <property type="nucleotide sequence ID" value="NC_005070.1"/>
</dbReference>
<dbReference type="SMR" id="Q7U4P7"/>
<dbReference type="STRING" id="84588.SYNW2020"/>
<dbReference type="KEGG" id="syw:SYNW2020"/>
<dbReference type="eggNOG" id="ENOG502Z8J9">
    <property type="taxonomic scope" value="Bacteria"/>
</dbReference>
<dbReference type="HOGENOM" id="CLU_086208_0_0_3"/>
<dbReference type="BioCyc" id="MetaCyc:MONOMER-18994"/>
<dbReference type="Proteomes" id="UP000001422">
    <property type="component" value="Chromosome"/>
</dbReference>
<dbReference type="GO" id="GO:0050617">
    <property type="term" value="F:15,16-dihydrobiliverdin:ferredoxin oxidoreductase activity"/>
    <property type="evidence" value="ECO:0007669"/>
    <property type="project" value="UniProtKB-UniRule"/>
</dbReference>
<dbReference type="GO" id="GO:0050897">
    <property type="term" value="F:cobalt ion binding"/>
    <property type="evidence" value="ECO:0007669"/>
    <property type="project" value="InterPro"/>
</dbReference>
<dbReference type="GO" id="GO:0010024">
    <property type="term" value="P:phytochromobilin biosynthetic process"/>
    <property type="evidence" value="ECO:0007669"/>
    <property type="project" value="InterPro"/>
</dbReference>
<dbReference type="Gene3D" id="3.40.1500.20">
    <property type="match status" value="1"/>
</dbReference>
<dbReference type="HAMAP" id="MF_00792">
    <property type="entry name" value="PebA"/>
    <property type="match status" value="1"/>
</dbReference>
<dbReference type="InterPro" id="IPR023658">
    <property type="entry name" value="DiHydbiliverdin_OxRdtase"/>
</dbReference>
<dbReference type="InterPro" id="IPR009249">
    <property type="entry name" value="Ferredoxin-dep_bilin_Rdtase"/>
</dbReference>
<dbReference type="NCBIfam" id="NF009720">
    <property type="entry name" value="PRK13247.1"/>
    <property type="match status" value="1"/>
</dbReference>
<dbReference type="PANTHER" id="PTHR34557">
    <property type="entry name" value="PHYTOCHROMOBILIN:FERREDOXIN OXIDOREDUCTASE, CHLOROPLASTIC"/>
    <property type="match status" value="1"/>
</dbReference>
<dbReference type="PANTHER" id="PTHR34557:SF1">
    <property type="entry name" value="PHYTOCHROMOBILIN:FERREDOXIN OXIDOREDUCTASE, CHLOROPLASTIC"/>
    <property type="match status" value="1"/>
</dbReference>
<dbReference type="Pfam" id="PF05996">
    <property type="entry name" value="Fe_bilin_red"/>
    <property type="match status" value="1"/>
</dbReference>
<accession>Q7U4P7</accession>
<keyword id="KW-0560">Oxidoreductase</keyword>
<evidence type="ECO:0000250" key="1"/>
<evidence type="ECO:0000305" key="2"/>
<protein>
    <recommendedName>
        <fullName>15,16-dihydrobiliverdin:ferredoxin oxidoreductase</fullName>
        <ecNumber>1.3.7.2</ecNumber>
    </recommendedName>
</protein>
<feature type="chain" id="PRO_0000216729" description="15,16-dihydrobiliverdin:ferredoxin oxidoreductase">
    <location>
        <begin position="1"/>
        <end position="235"/>
    </location>
</feature>
<proteinExistence type="inferred from homology"/>
<name>PEBA_PARMW</name>
<comment type="function">
    <text evidence="1">Catalyzes the two-electron reduction of biliverdin IX-alpha at the C15 methine bridge.</text>
</comment>
<comment type="catalytic activity">
    <reaction>
        <text>15,16-dihydrobiliverdin + oxidized 2[4Fe-4S]-[ferredoxin] = biliverdin IXalpha + reduced 2[4Fe-4S]-[ferredoxin] + 2 H(+)</text>
        <dbReference type="Rhea" id="RHEA:10168"/>
        <dbReference type="Rhea" id="RHEA-COMP:10002"/>
        <dbReference type="Rhea" id="RHEA-COMP:10004"/>
        <dbReference type="ChEBI" id="CHEBI:15378"/>
        <dbReference type="ChEBI" id="CHEBI:33722"/>
        <dbReference type="ChEBI" id="CHEBI:33723"/>
        <dbReference type="ChEBI" id="CHEBI:57899"/>
        <dbReference type="ChEBI" id="CHEBI:57991"/>
        <dbReference type="EC" id="1.3.7.2"/>
    </reaction>
</comment>
<comment type="similarity">
    <text evidence="2">Belongs to the HY2 family.</text>
</comment>
<gene>
    <name type="primary">pebA</name>
    <name type="ordered locus">SYNW2020</name>
</gene>